<protein>
    <recommendedName>
        <fullName>Hyaluronan synthase</fullName>
        <ecNumber>2.4.1.212</ecNumber>
    </recommendedName>
    <alternativeName>
        <fullName>Hyaluronate synthase</fullName>
    </alternativeName>
    <alternativeName>
        <fullName>Hyaluronic acid synthase</fullName>
        <shortName>HA synthase</shortName>
    </alternativeName>
</protein>
<dbReference type="EC" id="2.4.1.212"/>
<dbReference type="EMBL" id="L20853">
    <property type="protein sequence ID" value="AAA17981.1"/>
    <property type="molecule type" value="Unassigned_DNA"/>
</dbReference>
<dbReference type="EMBL" id="L20853">
    <property type="protein sequence ID" value="AAA17984.1"/>
    <property type="molecule type" value="Unassigned_DNA"/>
</dbReference>
<dbReference type="EMBL" id="CP000003">
    <property type="protein sequence ID" value="AAT88004.1"/>
    <property type="molecule type" value="Genomic_DNA"/>
</dbReference>
<dbReference type="RefSeq" id="WP_002982042.1">
    <property type="nucleotide sequence ID" value="NC_006086.1"/>
</dbReference>
<dbReference type="SMR" id="Q5X9A9"/>
<dbReference type="CAZy" id="GT2">
    <property type="family name" value="Glycosyltransferase Family 2"/>
</dbReference>
<dbReference type="KEGG" id="spa:M6_Spy1869"/>
<dbReference type="HOGENOM" id="CLU_029695_4_0_9"/>
<dbReference type="BRENDA" id="2.4.1.212">
    <property type="organism ID" value="5935"/>
</dbReference>
<dbReference type="UniPathway" id="UPA00341"/>
<dbReference type="PHI-base" id="PHI:5264"/>
<dbReference type="Proteomes" id="UP000001167">
    <property type="component" value="Chromosome"/>
</dbReference>
<dbReference type="GO" id="GO:0005886">
    <property type="term" value="C:plasma membrane"/>
    <property type="evidence" value="ECO:0007669"/>
    <property type="project" value="UniProtKB-SubCell"/>
</dbReference>
<dbReference type="GO" id="GO:0050501">
    <property type="term" value="F:hyaluronan synthase activity"/>
    <property type="evidence" value="ECO:0007669"/>
    <property type="project" value="UniProtKB-EC"/>
</dbReference>
<dbReference type="GO" id="GO:0085029">
    <property type="term" value="P:extracellular matrix assembly"/>
    <property type="evidence" value="ECO:0007669"/>
    <property type="project" value="TreeGrafter"/>
</dbReference>
<dbReference type="GO" id="GO:0030213">
    <property type="term" value="P:hyaluronan biosynthetic process"/>
    <property type="evidence" value="ECO:0007669"/>
    <property type="project" value="UniProtKB-UniPathway"/>
</dbReference>
<dbReference type="CDD" id="cd06423">
    <property type="entry name" value="CESA_like"/>
    <property type="match status" value="1"/>
</dbReference>
<dbReference type="Gene3D" id="3.90.550.10">
    <property type="entry name" value="Spore Coat Polysaccharide Biosynthesis Protein SpsA, Chain A"/>
    <property type="match status" value="1"/>
</dbReference>
<dbReference type="InterPro" id="IPR001173">
    <property type="entry name" value="Glyco_trans_2-like"/>
</dbReference>
<dbReference type="InterPro" id="IPR029044">
    <property type="entry name" value="Nucleotide-diphossugar_trans"/>
</dbReference>
<dbReference type="PANTHER" id="PTHR22913">
    <property type="entry name" value="HYALURONAN SYNTHASE"/>
    <property type="match status" value="1"/>
</dbReference>
<dbReference type="PANTHER" id="PTHR22913:SF12">
    <property type="entry name" value="MANNURONAN SYNTHASE"/>
    <property type="match status" value="1"/>
</dbReference>
<dbReference type="Pfam" id="PF00535">
    <property type="entry name" value="Glycos_transf_2"/>
    <property type="match status" value="1"/>
</dbReference>
<dbReference type="SUPFAM" id="SSF53448">
    <property type="entry name" value="Nucleotide-diphospho-sugar transferases"/>
    <property type="match status" value="1"/>
</dbReference>
<organism>
    <name type="scientific">Streptococcus pyogenes serotype M6 (strain ATCC BAA-946 / MGAS10394)</name>
    <dbReference type="NCBI Taxonomy" id="286636"/>
    <lineage>
        <taxon>Bacteria</taxon>
        <taxon>Bacillati</taxon>
        <taxon>Bacillota</taxon>
        <taxon>Bacilli</taxon>
        <taxon>Lactobacillales</taxon>
        <taxon>Streptococcaceae</taxon>
        <taxon>Streptococcus</taxon>
    </lineage>
</organism>
<keyword id="KW-0972">Capsule biogenesis/degradation</keyword>
<keyword id="KW-1003">Cell membrane</keyword>
<keyword id="KW-0328">Glycosyltransferase</keyword>
<keyword id="KW-0472">Membrane</keyword>
<keyword id="KW-0808">Transferase</keyword>
<keyword id="KW-0812">Transmembrane</keyword>
<keyword id="KW-1133">Transmembrane helix</keyword>
<keyword id="KW-0843">Virulence</keyword>
<name>HASA_STRP6</name>
<gene>
    <name type="primary">hasA</name>
    <name type="ordered locus">M6_Spy1869</name>
</gene>
<comment type="function">
    <text>Glycosaminoglycan synthesis. The hyaluronic acid capsule is involved in the pathogenicity of group A Streptococci; it may be the major virulence determinant.</text>
</comment>
<comment type="catalytic activity">
    <reaction>
        <text>[hyaluronan](n) + UDP-N-acetyl-alpha-D-glucosamine = N-acetyl-beta-D-glucosaminyl-(1-&gt;4)-[hyaluronan](n) + UDP + H(+)</text>
        <dbReference type="Rhea" id="RHEA:20465"/>
        <dbReference type="Rhea" id="RHEA-COMP:12583"/>
        <dbReference type="Rhea" id="RHEA-COMP:12585"/>
        <dbReference type="ChEBI" id="CHEBI:15378"/>
        <dbReference type="ChEBI" id="CHEBI:57705"/>
        <dbReference type="ChEBI" id="CHEBI:58223"/>
        <dbReference type="ChEBI" id="CHEBI:132153"/>
        <dbReference type="ChEBI" id="CHEBI:132154"/>
        <dbReference type="EC" id="2.4.1.212"/>
    </reaction>
</comment>
<comment type="catalytic activity">
    <reaction>
        <text>N-acetyl-beta-D-glucosaminyl-(1-&gt;4)-[hyaluronan](n) + UDP-alpha-D-glucuronate = [hyaluronan](n+1) + UDP + H(+)</text>
        <dbReference type="Rhea" id="RHEA:12528"/>
        <dbReference type="Rhea" id="RHEA-COMP:12585"/>
        <dbReference type="Rhea" id="RHEA-COMP:12587"/>
        <dbReference type="ChEBI" id="CHEBI:15378"/>
        <dbReference type="ChEBI" id="CHEBI:58052"/>
        <dbReference type="ChEBI" id="CHEBI:58223"/>
        <dbReference type="ChEBI" id="CHEBI:132153"/>
        <dbReference type="ChEBI" id="CHEBI:132154"/>
        <dbReference type="EC" id="2.4.1.212"/>
    </reaction>
</comment>
<comment type="cofactor">
    <cofactor>
        <name>Mg(2+)</name>
        <dbReference type="ChEBI" id="CHEBI:18420"/>
    </cofactor>
</comment>
<comment type="pathway">
    <text>Glycan biosynthesis; hyaluronan biosynthesis.</text>
</comment>
<comment type="subcellular location">
    <subcellularLocation>
        <location>Cell membrane</location>
        <topology>Multi-pass membrane protein</topology>
    </subcellularLocation>
</comment>
<comment type="similarity">
    <text evidence="2">Belongs to the NodC/HAS family.</text>
</comment>
<comment type="caution">
    <text evidence="2">It is uncertain whether Met-1 or Met-25 is the initiator.</text>
</comment>
<accession>Q5X9A9</accession>
<accession>Q08494</accession>
<accession>Q54865</accession>
<accession>Q54868</accession>
<proteinExistence type="inferred from homology"/>
<evidence type="ECO:0000255" key="1"/>
<evidence type="ECO:0000305" key="2"/>
<feature type="chain" id="PRO_0000197167" description="Hyaluronan synthase">
    <location>
        <begin position="1"/>
        <end position="419"/>
    </location>
</feature>
<feature type="transmembrane region" description="Helical" evidence="1">
    <location>
        <begin position="8"/>
        <end position="28"/>
    </location>
</feature>
<feature type="transmembrane region" description="Helical" evidence="1">
    <location>
        <begin position="33"/>
        <end position="53"/>
    </location>
</feature>
<feature type="transmembrane region" description="Helical" evidence="1">
    <location>
        <begin position="318"/>
        <end position="338"/>
    </location>
</feature>
<feature type="transmembrane region" description="Helical" evidence="1">
    <location>
        <begin position="345"/>
        <end position="365"/>
    </location>
</feature>
<feature type="transmembrane region" description="Helical" evidence="1">
    <location>
        <begin position="376"/>
        <end position="396"/>
    </location>
</feature>
<sequence>MPIFKKTLIVLSFIFLISILIYLNMYLFGTSTVGIYGVILITYLVIKLGLSFLYEPFKGNPHDYKVAAVIPSYNEDAESLLETLKSVLAQTYPLSEIYIVDDGSSNTDAIQLIEEYVNREVDICRNVIVHRSLVNKGKRHAQAWAFERSDADVFLTVDSDTYIYPNALEELLKSFNDETVYAATGHLNARNRQTNLLTRLTDIRYDNAFGVERAAQSLTGNILVCSGPLSIYRREVIIPNLERYKNQTFLGLPVSIGDDRCLTNYAIDLGRTVYQSTARCDTDVPFQLKSYLKQQNRWNKSFFRESIISVKKILSNPIVALWTIFEVVMFMMLIVAIGNLLFNQAIQLDLIKLFAFLSIIFIVALCRNVHYMVKHPASFLLSPLYGILHLFVLQPLKLYSLCTIKNTEWGTRKKVTIFK</sequence>
<reference key="1">
    <citation type="journal article" date="1993" name="J. Biol. Chem.">
        <title>Molecular cloning, identification, and sequence of the hyaluronan synthase gene from group A Streptococcus pyogenes.</title>
        <authorList>
            <person name="DeAngelis P.L."/>
            <person name="Papaconstantinou J."/>
            <person name="Weigel P.H."/>
        </authorList>
    </citation>
    <scope>NUCLEOTIDE SEQUENCE [GENOMIC DNA]</scope>
    <source>
        <strain>ATCC 21547 / S43 / Serotype M6</strain>
    </source>
</reference>
<reference key="2">
    <citation type="journal article" date="2004" name="J. Infect. Dis.">
        <title>Progress toward characterization of the group A Streptococcus metagenome: complete genome sequence of a macrolide-resistant serotype M6 strain.</title>
        <authorList>
            <person name="Banks D.J."/>
            <person name="Porcella S.F."/>
            <person name="Barbian K.D."/>
            <person name="Beres S.B."/>
            <person name="Philips L.E."/>
            <person name="Voyich J.M."/>
            <person name="DeLeo F.R."/>
            <person name="Martin J.M."/>
            <person name="Somerville G.A."/>
            <person name="Musser J.M."/>
        </authorList>
    </citation>
    <scope>NUCLEOTIDE SEQUENCE [LARGE SCALE GENOMIC DNA]</scope>
    <source>
        <strain>ATCC BAA-946 / MGAS10394</strain>
    </source>
</reference>